<comment type="function">
    <text evidence="1">Participates actively in the response to hyperosmotic and heat shock by preventing the aggregation of stress-denatured proteins and by disaggregating proteins, also in an autonomous, DnaK-independent fashion. Unfolded proteins bind initially to DnaJ; upon interaction with the DnaJ-bound protein, DnaK hydrolyzes its bound ATP, resulting in the formation of a stable complex. GrpE releases ADP from DnaK; ATP binding to DnaK triggers the release of the substrate protein, thus completing the reaction cycle. Several rounds of ATP-dependent interactions between DnaJ, DnaK and GrpE are required for fully efficient folding. Also involved, together with DnaK and GrpE, in the DNA replication of plasmids through activation of initiation proteins.</text>
</comment>
<comment type="cofactor">
    <cofactor evidence="1">
        <name>Zn(2+)</name>
        <dbReference type="ChEBI" id="CHEBI:29105"/>
    </cofactor>
    <text evidence="1">Binds 2 Zn(2+) ions per monomer.</text>
</comment>
<comment type="subunit">
    <text evidence="1">Homodimer.</text>
</comment>
<comment type="subcellular location">
    <subcellularLocation>
        <location evidence="1">Cytoplasm</location>
    </subcellularLocation>
</comment>
<comment type="domain">
    <text evidence="1">The J domain is necessary and sufficient to stimulate DnaK ATPase activity. Zinc center 1 plays an important role in the autonomous, DnaK-independent chaperone activity of DnaJ. Zinc center 2 is essential for interaction with DnaK and for DnaJ activity.</text>
</comment>
<comment type="similarity">
    <text evidence="1">Belongs to the DnaJ family.</text>
</comment>
<protein>
    <recommendedName>
        <fullName evidence="1">Chaperone protein DnaJ</fullName>
    </recommendedName>
</protein>
<evidence type="ECO:0000255" key="1">
    <source>
        <dbReference type="HAMAP-Rule" id="MF_01152"/>
    </source>
</evidence>
<keyword id="KW-0143">Chaperone</keyword>
<keyword id="KW-0963">Cytoplasm</keyword>
<keyword id="KW-0235">DNA replication</keyword>
<keyword id="KW-0479">Metal-binding</keyword>
<keyword id="KW-1185">Reference proteome</keyword>
<keyword id="KW-0677">Repeat</keyword>
<keyword id="KW-0346">Stress response</keyword>
<keyword id="KW-0862">Zinc</keyword>
<keyword id="KW-0863">Zinc-finger</keyword>
<name>DNAJ_SACD2</name>
<proteinExistence type="inferred from homology"/>
<sequence>MSKRDYYEVLGVSKDVSPQELKKAYRKVAMKYHPDRNSDDPNSEDKFKEASEAYEVLSDAQKRAAYDQYGHAGVDGNAGMGGGAGAGNFSDIFGDVFGDIFGGGGGRRRGGPSRGSDLRYTLDLSLEDAVKGTTVKIRVPTLVSCKPCGGSGAKPGTSPQTCTTCGGHGQVRMQQGFFSVQQTCPNCRGQGKMITDPCKECHGHGRVEETKTLSVKVPPGVDTGDRIRLAGEGEAGADGGPAGDLYVQVDVQDHAFFQREGRNLYCEVPISLFDACLGGELEVPTLDGRVKLKIPAETQTGKLFRLRGKGVTPVRGGAAGDLMCRVIIETPVNLTKKQKELLEELKASMKGEKNSPKQESWFEGMKNFFGDLKM</sequence>
<gene>
    <name evidence="1" type="primary">dnaJ</name>
    <name type="ordered locus">Sde_2732</name>
</gene>
<accession>Q21H37</accession>
<dbReference type="EMBL" id="CP000282">
    <property type="protein sequence ID" value="ABD81992.1"/>
    <property type="molecule type" value="Genomic_DNA"/>
</dbReference>
<dbReference type="RefSeq" id="WP_011469209.1">
    <property type="nucleotide sequence ID" value="NC_007912.1"/>
</dbReference>
<dbReference type="SMR" id="Q21H37"/>
<dbReference type="STRING" id="203122.Sde_2732"/>
<dbReference type="GeneID" id="98614390"/>
<dbReference type="KEGG" id="sde:Sde_2732"/>
<dbReference type="eggNOG" id="COG0484">
    <property type="taxonomic scope" value="Bacteria"/>
</dbReference>
<dbReference type="HOGENOM" id="CLU_017633_0_7_6"/>
<dbReference type="OrthoDB" id="9779889at2"/>
<dbReference type="Proteomes" id="UP000001947">
    <property type="component" value="Chromosome"/>
</dbReference>
<dbReference type="GO" id="GO:0005737">
    <property type="term" value="C:cytoplasm"/>
    <property type="evidence" value="ECO:0007669"/>
    <property type="project" value="UniProtKB-SubCell"/>
</dbReference>
<dbReference type="GO" id="GO:0005524">
    <property type="term" value="F:ATP binding"/>
    <property type="evidence" value="ECO:0007669"/>
    <property type="project" value="InterPro"/>
</dbReference>
<dbReference type="GO" id="GO:0031072">
    <property type="term" value="F:heat shock protein binding"/>
    <property type="evidence" value="ECO:0007669"/>
    <property type="project" value="InterPro"/>
</dbReference>
<dbReference type="GO" id="GO:0051082">
    <property type="term" value="F:unfolded protein binding"/>
    <property type="evidence" value="ECO:0007669"/>
    <property type="project" value="UniProtKB-UniRule"/>
</dbReference>
<dbReference type="GO" id="GO:0008270">
    <property type="term" value="F:zinc ion binding"/>
    <property type="evidence" value="ECO:0007669"/>
    <property type="project" value="UniProtKB-UniRule"/>
</dbReference>
<dbReference type="GO" id="GO:0051085">
    <property type="term" value="P:chaperone cofactor-dependent protein refolding"/>
    <property type="evidence" value="ECO:0007669"/>
    <property type="project" value="TreeGrafter"/>
</dbReference>
<dbReference type="GO" id="GO:0006260">
    <property type="term" value="P:DNA replication"/>
    <property type="evidence" value="ECO:0007669"/>
    <property type="project" value="UniProtKB-KW"/>
</dbReference>
<dbReference type="GO" id="GO:0042026">
    <property type="term" value="P:protein refolding"/>
    <property type="evidence" value="ECO:0007669"/>
    <property type="project" value="TreeGrafter"/>
</dbReference>
<dbReference type="GO" id="GO:0009408">
    <property type="term" value="P:response to heat"/>
    <property type="evidence" value="ECO:0007669"/>
    <property type="project" value="InterPro"/>
</dbReference>
<dbReference type="CDD" id="cd06257">
    <property type="entry name" value="DnaJ"/>
    <property type="match status" value="1"/>
</dbReference>
<dbReference type="CDD" id="cd10747">
    <property type="entry name" value="DnaJ_C"/>
    <property type="match status" value="1"/>
</dbReference>
<dbReference type="CDD" id="cd10719">
    <property type="entry name" value="DnaJ_zf"/>
    <property type="match status" value="1"/>
</dbReference>
<dbReference type="FunFam" id="1.10.287.110:FF:000034">
    <property type="entry name" value="Chaperone protein DnaJ"/>
    <property type="match status" value="1"/>
</dbReference>
<dbReference type="FunFam" id="2.10.230.10:FF:000002">
    <property type="entry name" value="Molecular chaperone DnaJ"/>
    <property type="match status" value="1"/>
</dbReference>
<dbReference type="FunFam" id="2.60.260.20:FF:000004">
    <property type="entry name" value="Molecular chaperone DnaJ"/>
    <property type="match status" value="1"/>
</dbReference>
<dbReference type="Gene3D" id="1.10.287.110">
    <property type="entry name" value="DnaJ domain"/>
    <property type="match status" value="1"/>
</dbReference>
<dbReference type="Gene3D" id="2.10.230.10">
    <property type="entry name" value="Heat shock protein DnaJ, cysteine-rich domain"/>
    <property type="match status" value="1"/>
</dbReference>
<dbReference type="Gene3D" id="2.60.260.20">
    <property type="entry name" value="Urease metallochaperone UreE, N-terminal domain"/>
    <property type="match status" value="2"/>
</dbReference>
<dbReference type="HAMAP" id="MF_01152">
    <property type="entry name" value="DnaJ"/>
    <property type="match status" value="1"/>
</dbReference>
<dbReference type="InterPro" id="IPR012724">
    <property type="entry name" value="DnaJ"/>
</dbReference>
<dbReference type="InterPro" id="IPR002939">
    <property type="entry name" value="DnaJ_C"/>
</dbReference>
<dbReference type="InterPro" id="IPR001623">
    <property type="entry name" value="DnaJ_domain"/>
</dbReference>
<dbReference type="InterPro" id="IPR018253">
    <property type="entry name" value="DnaJ_domain_CS"/>
</dbReference>
<dbReference type="InterPro" id="IPR008971">
    <property type="entry name" value="HSP40/DnaJ_pept-bd"/>
</dbReference>
<dbReference type="InterPro" id="IPR001305">
    <property type="entry name" value="HSP_DnaJ_Cys-rich_dom"/>
</dbReference>
<dbReference type="InterPro" id="IPR036410">
    <property type="entry name" value="HSP_DnaJ_Cys-rich_dom_sf"/>
</dbReference>
<dbReference type="InterPro" id="IPR036869">
    <property type="entry name" value="J_dom_sf"/>
</dbReference>
<dbReference type="NCBIfam" id="TIGR02349">
    <property type="entry name" value="DnaJ_bact"/>
    <property type="match status" value="1"/>
</dbReference>
<dbReference type="NCBIfam" id="NF008035">
    <property type="entry name" value="PRK10767.1"/>
    <property type="match status" value="1"/>
</dbReference>
<dbReference type="PANTHER" id="PTHR43096:SF48">
    <property type="entry name" value="CHAPERONE PROTEIN DNAJ"/>
    <property type="match status" value="1"/>
</dbReference>
<dbReference type="PANTHER" id="PTHR43096">
    <property type="entry name" value="DNAJ HOMOLOG 1, MITOCHONDRIAL-RELATED"/>
    <property type="match status" value="1"/>
</dbReference>
<dbReference type="Pfam" id="PF00226">
    <property type="entry name" value="DnaJ"/>
    <property type="match status" value="1"/>
</dbReference>
<dbReference type="Pfam" id="PF01556">
    <property type="entry name" value="DnaJ_C"/>
    <property type="match status" value="1"/>
</dbReference>
<dbReference type="Pfam" id="PF00684">
    <property type="entry name" value="DnaJ_CXXCXGXG"/>
    <property type="match status" value="1"/>
</dbReference>
<dbReference type="PRINTS" id="PR00625">
    <property type="entry name" value="JDOMAIN"/>
</dbReference>
<dbReference type="SMART" id="SM00271">
    <property type="entry name" value="DnaJ"/>
    <property type="match status" value="1"/>
</dbReference>
<dbReference type="SUPFAM" id="SSF46565">
    <property type="entry name" value="Chaperone J-domain"/>
    <property type="match status" value="1"/>
</dbReference>
<dbReference type="SUPFAM" id="SSF57938">
    <property type="entry name" value="DnaJ/Hsp40 cysteine-rich domain"/>
    <property type="match status" value="1"/>
</dbReference>
<dbReference type="SUPFAM" id="SSF49493">
    <property type="entry name" value="HSP40/DnaJ peptide-binding domain"/>
    <property type="match status" value="2"/>
</dbReference>
<dbReference type="PROSITE" id="PS00636">
    <property type="entry name" value="DNAJ_1"/>
    <property type="match status" value="1"/>
</dbReference>
<dbReference type="PROSITE" id="PS50076">
    <property type="entry name" value="DNAJ_2"/>
    <property type="match status" value="1"/>
</dbReference>
<dbReference type="PROSITE" id="PS51188">
    <property type="entry name" value="ZF_CR"/>
    <property type="match status" value="1"/>
</dbReference>
<organism>
    <name type="scientific">Saccharophagus degradans (strain 2-40 / ATCC 43961 / DSM 17024)</name>
    <dbReference type="NCBI Taxonomy" id="203122"/>
    <lineage>
        <taxon>Bacteria</taxon>
        <taxon>Pseudomonadati</taxon>
        <taxon>Pseudomonadota</taxon>
        <taxon>Gammaproteobacteria</taxon>
        <taxon>Cellvibrionales</taxon>
        <taxon>Cellvibrionaceae</taxon>
        <taxon>Saccharophagus</taxon>
    </lineage>
</organism>
<reference key="1">
    <citation type="journal article" date="2008" name="PLoS Genet.">
        <title>Complete genome sequence of the complex carbohydrate-degrading marine bacterium, Saccharophagus degradans strain 2-40 T.</title>
        <authorList>
            <person name="Weiner R.M."/>
            <person name="Taylor L.E. II"/>
            <person name="Henrissat B."/>
            <person name="Hauser L."/>
            <person name="Land M."/>
            <person name="Coutinho P.M."/>
            <person name="Rancurel C."/>
            <person name="Saunders E.H."/>
            <person name="Longmire A.G."/>
            <person name="Zhang H."/>
            <person name="Bayer E.A."/>
            <person name="Gilbert H.J."/>
            <person name="Larimer F."/>
            <person name="Zhulin I.B."/>
            <person name="Ekborg N.A."/>
            <person name="Lamed R."/>
            <person name="Richardson P.M."/>
            <person name="Borovok I."/>
            <person name="Hutcheson S."/>
        </authorList>
    </citation>
    <scope>NUCLEOTIDE SEQUENCE [LARGE SCALE GENOMIC DNA]</scope>
    <source>
        <strain>2-40 / ATCC 43961 / DSM 17024</strain>
    </source>
</reference>
<feature type="chain" id="PRO_1000085281" description="Chaperone protein DnaJ">
    <location>
        <begin position="1"/>
        <end position="374"/>
    </location>
</feature>
<feature type="domain" description="J" evidence="1">
    <location>
        <begin position="5"/>
        <end position="70"/>
    </location>
</feature>
<feature type="repeat" description="CXXCXGXG motif">
    <location>
        <begin position="145"/>
        <end position="152"/>
    </location>
</feature>
<feature type="repeat" description="CXXCXGXG motif">
    <location>
        <begin position="162"/>
        <end position="169"/>
    </location>
</feature>
<feature type="repeat" description="CXXCXGXG motif">
    <location>
        <begin position="184"/>
        <end position="191"/>
    </location>
</feature>
<feature type="repeat" description="CXXCXGXG motif">
    <location>
        <begin position="198"/>
        <end position="205"/>
    </location>
</feature>
<feature type="zinc finger region" description="CR-type" evidence="1">
    <location>
        <begin position="132"/>
        <end position="210"/>
    </location>
</feature>
<feature type="binding site" evidence="1">
    <location>
        <position position="145"/>
    </location>
    <ligand>
        <name>Zn(2+)</name>
        <dbReference type="ChEBI" id="CHEBI:29105"/>
        <label>1</label>
    </ligand>
</feature>
<feature type="binding site" evidence="1">
    <location>
        <position position="148"/>
    </location>
    <ligand>
        <name>Zn(2+)</name>
        <dbReference type="ChEBI" id="CHEBI:29105"/>
        <label>1</label>
    </ligand>
</feature>
<feature type="binding site" evidence="1">
    <location>
        <position position="162"/>
    </location>
    <ligand>
        <name>Zn(2+)</name>
        <dbReference type="ChEBI" id="CHEBI:29105"/>
        <label>2</label>
    </ligand>
</feature>
<feature type="binding site" evidence="1">
    <location>
        <position position="165"/>
    </location>
    <ligand>
        <name>Zn(2+)</name>
        <dbReference type="ChEBI" id="CHEBI:29105"/>
        <label>2</label>
    </ligand>
</feature>
<feature type="binding site" evidence="1">
    <location>
        <position position="184"/>
    </location>
    <ligand>
        <name>Zn(2+)</name>
        <dbReference type="ChEBI" id="CHEBI:29105"/>
        <label>2</label>
    </ligand>
</feature>
<feature type="binding site" evidence="1">
    <location>
        <position position="187"/>
    </location>
    <ligand>
        <name>Zn(2+)</name>
        <dbReference type="ChEBI" id="CHEBI:29105"/>
        <label>2</label>
    </ligand>
</feature>
<feature type="binding site" evidence="1">
    <location>
        <position position="198"/>
    </location>
    <ligand>
        <name>Zn(2+)</name>
        <dbReference type="ChEBI" id="CHEBI:29105"/>
        <label>1</label>
    </ligand>
</feature>
<feature type="binding site" evidence="1">
    <location>
        <position position="201"/>
    </location>
    <ligand>
        <name>Zn(2+)</name>
        <dbReference type="ChEBI" id="CHEBI:29105"/>
        <label>1</label>
    </ligand>
</feature>